<reference key="1">
    <citation type="journal article" date="1997" name="Fungal Genet. Biol.">
        <title>Expression of two closely linked hydrophobin genes of Coprinus cinereus is monokaryon-specific and down-regulated by the oid-1 mutation.</title>
        <authorList>
            <person name="Asgeirsdottir S.A."/>
            <person name="Halsall J.R."/>
            <person name="Casselton L.A."/>
        </authorList>
    </citation>
    <scope>NUCLEOTIDE SEQUENCE [GENOMIC DNA]</scope>
    <scope>DEVELOPMENTAL STAGE</scope>
    <source>
        <strain>JV6</strain>
    </source>
</reference>
<gene>
    <name evidence="5" type="primary">coH2</name>
</gene>
<dbReference type="EMBL" id="Y10628">
    <property type="protein sequence ID" value="CAA71653.1"/>
    <property type="molecule type" value="Genomic_DNA"/>
</dbReference>
<dbReference type="VEuPathDB" id="FungiDB:CC1G_02185"/>
<dbReference type="VEuPathDB" id="FungiDB:CC2G_002588"/>
<dbReference type="GO" id="GO:0005576">
    <property type="term" value="C:extracellular region"/>
    <property type="evidence" value="ECO:0007669"/>
    <property type="project" value="UniProtKB-KW"/>
</dbReference>
<dbReference type="GO" id="GO:0009277">
    <property type="term" value="C:fungal-type cell wall"/>
    <property type="evidence" value="ECO:0007669"/>
    <property type="project" value="InterPro"/>
</dbReference>
<dbReference type="GO" id="GO:0005199">
    <property type="term" value="F:structural constituent of cell wall"/>
    <property type="evidence" value="ECO:0007669"/>
    <property type="project" value="InterPro"/>
</dbReference>
<dbReference type="CDD" id="cd23507">
    <property type="entry name" value="hydrophobin_I"/>
    <property type="match status" value="1"/>
</dbReference>
<dbReference type="InterPro" id="IPR001338">
    <property type="entry name" value="Hydrophobin"/>
</dbReference>
<dbReference type="InterPro" id="IPR019778">
    <property type="entry name" value="Hydrophobin_CS"/>
</dbReference>
<dbReference type="Pfam" id="PF01185">
    <property type="entry name" value="Hydrophobin"/>
    <property type="match status" value="1"/>
</dbReference>
<dbReference type="SMART" id="SM00075">
    <property type="entry name" value="HYDRO"/>
    <property type="match status" value="1"/>
</dbReference>
<dbReference type="PROSITE" id="PS00956">
    <property type="entry name" value="HYDROPHOBIN"/>
    <property type="match status" value="1"/>
</dbReference>
<feature type="signal peptide" evidence="2">
    <location>
        <begin position="1"/>
        <end position="17"/>
    </location>
</feature>
<feature type="chain" id="PRO_5013988759" description="Class I hydrophobin 2">
    <location>
        <begin position="18"/>
        <end position="110"/>
    </location>
</feature>
<feature type="glycosylation site" description="N-linked (GlcNAc...) asparagine" evidence="3">
    <location>
        <position position="57"/>
    </location>
</feature>
<feature type="disulfide bond" evidence="1">
    <location>
        <begin position="28"/>
        <end position="89"/>
    </location>
</feature>
<feature type="disulfide bond" evidence="1">
    <location>
        <begin position="36"/>
        <end position="83"/>
    </location>
</feature>
<feature type="disulfide bond" evidence="1">
    <location>
        <begin position="37"/>
        <end position="71"/>
    </location>
</feature>
<feature type="disulfide bond" evidence="1">
    <location>
        <begin position="90"/>
        <end position="103"/>
    </location>
</feature>
<organism>
    <name type="scientific">Coprinopsis cinerea</name>
    <name type="common">Inky cap fungus</name>
    <name type="synonym">Hormographiella aspergillata</name>
    <dbReference type="NCBI Taxonomy" id="5346"/>
    <lineage>
        <taxon>Eukaryota</taxon>
        <taxon>Fungi</taxon>
        <taxon>Dikarya</taxon>
        <taxon>Basidiomycota</taxon>
        <taxon>Agaricomycotina</taxon>
        <taxon>Agaricomycetes</taxon>
        <taxon>Agaricomycetidae</taxon>
        <taxon>Agaricales</taxon>
        <taxon>Agaricineae</taxon>
        <taxon>Psathyrellaceae</taxon>
        <taxon>Coprinopsis</taxon>
    </lineage>
</organism>
<protein>
    <recommendedName>
        <fullName evidence="5">Class I hydrophobin 2</fullName>
    </recommendedName>
</protein>
<evidence type="ECO:0000250" key="1">
    <source>
        <dbReference type="UniProtKB" id="Q04571"/>
    </source>
</evidence>
<evidence type="ECO:0000255" key="2"/>
<evidence type="ECO:0000255" key="3">
    <source>
        <dbReference type="PROSITE-ProRule" id="PRU00498"/>
    </source>
</evidence>
<evidence type="ECO:0000269" key="4">
    <source>
    </source>
</evidence>
<evidence type="ECO:0000303" key="5">
    <source>
    </source>
</evidence>
<evidence type="ECO:0000305" key="6"/>
<name>COH2_COPCI</name>
<accession>P78602</accession>
<keyword id="KW-0134">Cell wall</keyword>
<keyword id="KW-1015">Disulfide bond</keyword>
<keyword id="KW-0325">Glycoprotein</keyword>
<keyword id="KW-0964">Secreted</keyword>
<keyword id="KW-0732">Signal</keyword>
<comment type="function">
    <text evidence="4 6">Aerial growth, conidiation, and dispersal of filamentous fungi in the environment rely upon a capability of their secreting small amphipathic proteins called hydrophobins (HPBs) with low sequence identity. Class I can self-assemble into an outermost layer of rodlet bundles on aerial cell surfaces, conferring cellular hydrophobicity that supports fungal growth, development and dispersal; whereas Class II form highly ordered films at water-air interfaces through intermolecular interactions but contribute nothing to the rodlet structure (Probable). CoH2 is an asexual monokaryon-specific class I hydrophobin that is involved in aerial growth of mycelia (PubMed:9344631).</text>
</comment>
<comment type="subunit">
    <text evidence="1">Self-assembles to form functional amyloid fibrils called rodlets. Self-assembly into fibrillar rodlets occurs spontaneously at hydrophobic:hydrophilic interfaces and the rodlets further associate laterally to form amphipathic monolayers.</text>
</comment>
<comment type="subcellular location">
    <subcellularLocation>
        <location>Secreted</location>
    </subcellularLocation>
    <subcellularLocation>
        <location>Secreted</location>
        <location>Cell wall</location>
    </subcellularLocation>
</comment>
<comment type="developmental stage">
    <text evidence="4">Expressed in vegetative monokaryotic cells but not in the asexual oidia produced on the surface of monokaryons (PubMed:9344631). Expression is also very low in dikaryotic mycelia and absent from fruiting bodies (PubMed:9344631).</text>
</comment>
<comment type="similarity">
    <text evidence="6">Belongs to the fungal hydrophobin family.</text>
</comment>
<sequence>MQFKFLTTVALATLAVAVPTDPPPTNQCNAPNNLECCNSVQAPTNSGLIGTLLGLLNISVGDITGLVGLTCNPISLIGGGNSCNAQTVCCQNNYFGGLISIGCTPIIIDV</sequence>
<proteinExistence type="evidence at transcript level"/>